<reference key="1">
    <citation type="submission" date="2007-11" db="EMBL/GenBank/DDBJ databases">
        <title>The genome sequence of the hyperthermophilic bacterium Thermotoga neapolitana.</title>
        <authorList>
            <person name="Lim S.K."/>
            <person name="Kim J.S."/>
            <person name="Cha S.H."/>
            <person name="Park B.C."/>
            <person name="Lee D.S."/>
            <person name="Tae H.S."/>
            <person name="Kim S.-J."/>
            <person name="Kim J.J."/>
            <person name="Park K.J."/>
            <person name="Lee S.Y."/>
        </authorList>
    </citation>
    <scope>NUCLEOTIDE SEQUENCE [LARGE SCALE GENOMIC DNA]</scope>
    <source>
        <strain>ATCC 49049 / DSM 4359 / NBRC 107923 / NS-E</strain>
    </source>
</reference>
<protein>
    <recommendedName>
        <fullName evidence="1">GTPase Der</fullName>
    </recommendedName>
    <alternativeName>
        <fullName evidence="1">GTP-binding protein EngA</fullName>
    </alternativeName>
</protein>
<organism>
    <name type="scientific">Thermotoga neapolitana (strain ATCC 49049 / DSM 4359 / NBRC 107923 / NS-E)</name>
    <dbReference type="NCBI Taxonomy" id="309803"/>
    <lineage>
        <taxon>Bacteria</taxon>
        <taxon>Thermotogati</taxon>
        <taxon>Thermotogota</taxon>
        <taxon>Thermotogae</taxon>
        <taxon>Thermotogales</taxon>
        <taxon>Thermotogaceae</taxon>
        <taxon>Thermotoga</taxon>
    </lineage>
</organism>
<sequence length="439" mass="50090">MATVLIVGKPNVGKSTLFNKLVRKRKAIVEDEEGVTRDPVQDTVEWYGKTFRLVDTCGVFDNPQDVISKKMKEVTLNMIREADLVLFVVDGKNGITKEDESLADFLRKSGVDVILVANKTENQRRFEREIKPELYRLGFGDPIPVSAEHSINLDTLMEKIIQKLEEKGLDLETKPEITEAIKIAIVGRPNVGKSTLFNAILNKERALVSPIPGTTRDPVDDEVFIDGKKYIFVDTAGLRRKSRIEPKTVERYSTYRVVESIERADVAVIVLDATQGITRQDQRIAGLVERKGKASVVVFNKWDLVEHREKRYDEFTKLFREKLYFVDYSPLIFTSADKGWGVEKIIDAINLAYSSYTTKVPSSALNSALQKVLAFTNLPRGLKIFFGLQVDIKPPTFLFFVNNTEKIKEPQKVFLRRLIREYVFPFEGSPIFLKFKKSR</sequence>
<accession>B9K8E0</accession>
<gene>
    <name evidence="1" type="primary">der</name>
    <name type="synonym">engA</name>
    <name type="ordered locus">CTN_1047</name>
</gene>
<name>DER_THENN</name>
<proteinExistence type="inferred from homology"/>
<evidence type="ECO:0000255" key="1">
    <source>
        <dbReference type="HAMAP-Rule" id="MF_00195"/>
    </source>
</evidence>
<feature type="chain" id="PRO_1000124378" description="GTPase Der">
    <location>
        <begin position="1"/>
        <end position="439"/>
    </location>
</feature>
<feature type="domain" description="EngA-type G 1">
    <location>
        <begin position="2"/>
        <end position="168"/>
    </location>
</feature>
<feature type="domain" description="EngA-type G 2">
    <location>
        <begin position="181"/>
        <end position="357"/>
    </location>
</feature>
<feature type="domain" description="KH-like" evidence="1">
    <location>
        <begin position="358"/>
        <end position="439"/>
    </location>
</feature>
<feature type="binding site" evidence="1">
    <location>
        <begin position="8"/>
        <end position="15"/>
    </location>
    <ligand>
        <name>GTP</name>
        <dbReference type="ChEBI" id="CHEBI:37565"/>
        <label>1</label>
    </ligand>
</feature>
<feature type="binding site" evidence="1">
    <location>
        <begin position="55"/>
        <end position="59"/>
    </location>
    <ligand>
        <name>GTP</name>
        <dbReference type="ChEBI" id="CHEBI:37565"/>
        <label>1</label>
    </ligand>
</feature>
<feature type="binding site" evidence="1">
    <location>
        <begin position="118"/>
        <end position="121"/>
    </location>
    <ligand>
        <name>GTP</name>
        <dbReference type="ChEBI" id="CHEBI:37565"/>
        <label>1</label>
    </ligand>
</feature>
<feature type="binding site" evidence="1">
    <location>
        <begin position="187"/>
        <end position="194"/>
    </location>
    <ligand>
        <name>GTP</name>
        <dbReference type="ChEBI" id="CHEBI:37565"/>
        <label>2</label>
    </ligand>
</feature>
<feature type="binding site" evidence="1">
    <location>
        <begin position="234"/>
        <end position="238"/>
    </location>
    <ligand>
        <name>GTP</name>
        <dbReference type="ChEBI" id="CHEBI:37565"/>
        <label>2</label>
    </ligand>
</feature>
<feature type="binding site" evidence="1">
    <location>
        <begin position="300"/>
        <end position="303"/>
    </location>
    <ligand>
        <name>GTP</name>
        <dbReference type="ChEBI" id="CHEBI:37565"/>
        <label>2</label>
    </ligand>
</feature>
<dbReference type="EMBL" id="CP000916">
    <property type="protein sequence ID" value="ACM23223.1"/>
    <property type="molecule type" value="Genomic_DNA"/>
</dbReference>
<dbReference type="RefSeq" id="WP_015919539.1">
    <property type="nucleotide sequence ID" value="NC_011978.1"/>
</dbReference>
<dbReference type="SMR" id="B9K8E0"/>
<dbReference type="STRING" id="309803.CTN_1047"/>
<dbReference type="KEGG" id="tna:CTN_1047"/>
<dbReference type="eggNOG" id="COG1160">
    <property type="taxonomic scope" value="Bacteria"/>
</dbReference>
<dbReference type="HOGENOM" id="CLU_016077_6_2_0"/>
<dbReference type="Proteomes" id="UP000000445">
    <property type="component" value="Chromosome"/>
</dbReference>
<dbReference type="GO" id="GO:0005525">
    <property type="term" value="F:GTP binding"/>
    <property type="evidence" value="ECO:0007669"/>
    <property type="project" value="UniProtKB-UniRule"/>
</dbReference>
<dbReference type="GO" id="GO:0043022">
    <property type="term" value="F:ribosome binding"/>
    <property type="evidence" value="ECO:0007669"/>
    <property type="project" value="TreeGrafter"/>
</dbReference>
<dbReference type="GO" id="GO:0042254">
    <property type="term" value="P:ribosome biogenesis"/>
    <property type="evidence" value="ECO:0007669"/>
    <property type="project" value="UniProtKB-KW"/>
</dbReference>
<dbReference type="CDD" id="cd01894">
    <property type="entry name" value="EngA1"/>
    <property type="match status" value="1"/>
</dbReference>
<dbReference type="CDD" id="cd01895">
    <property type="entry name" value="EngA2"/>
    <property type="match status" value="1"/>
</dbReference>
<dbReference type="FunFam" id="3.40.50.300:FF:000040">
    <property type="entry name" value="GTPase Der"/>
    <property type="match status" value="1"/>
</dbReference>
<dbReference type="FunFam" id="3.40.50.300:FF:000057">
    <property type="entry name" value="GTPase Der"/>
    <property type="match status" value="1"/>
</dbReference>
<dbReference type="Gene3D" id="3.30.300.20">
    <property type="match status" value="1"/>
</dbReference>
<dbReference type="Gene3D" id="3.40.50.300">
    <property type="entry name" value="P-loop containing nucleotide triphosphate hydrolases"/>
    <property type="match status" value="2"/>
</dbReference>
<dbReference type="HAMAP" id="MF_00195">
    <property type="entry name" value="GTPase_Der"/>
    <property type="match status" value="1"/>
</dbReference>
<dbReference type="InterPro" id="IPR031166">
    <property type="entry name" value="G_ENGA"/>
</dbReference>
<dbReference type="InterPro" id="IPR006073">
    <property type="entry name" value="GTP-bd"/>
</dbReference>
<dbReference type="InterPro" id="IPR016484">
    <property type="entry name" value="GTPase_Der"/>
</dbReference>
<dbReference type="InterPro" id="IPR032859">
    <property type="entry name" value="KH_dom-like"/>
</dbReference>
<dbReference type="InterPro" id="IPR015946">
    <property type="entry name" value="KH_dom-like_a/b"/>
</dbReference>
<dbReference type="InterPro" id="IPR027417">
    <property type="entry name" value="P-loop_NTPase"/>
</dbReference>
<dbReference type="InterPro" id="IPR005225">
    <property type="entry name" value="Small_GTP-bd"/>
</dbReference>
<dbReference type="NCBIfam" id="TIGR03594">
    <property type="entry name" value="GTPase_EngA"/>
    <property type="match status" value="1"/>
</dbReference>
<dbReference type="NCBIfam" id="TIGR00231">
    <property type="entry name" value="small_GTP"/>
    <property type="match status" value="2"/>
</dbReference>
<dbReference type="PANTHER" id="PTHR43834">
    <property type="entry name" value="GTPASE DER"/>
    <property type="match status" value="1"/>
</dbReference>
<dbReference type="PANTHER" id="PTHR43834:SF6">
    <property type="entry name" value="GTPASE DER"/>
    <property type="match status" value="1"/>
</dbReference>
<dbReference type="Pfam" id="PF14714">
    <property type="entry name" value="KH_dom-like"/>
    <property type="match status" value="1"/>
</dbReference>
<dbReference type="Pfam" id="PF01926">
    <property type="entry name" value="MMR_HSR1"/>
    <property type="match status" value="2"/>
</dbReference>
<dbReference type="PIRSF" id="PIRSF006485">
    <property type="entry name" value="GTP-binding_EngA"/>
    <property type="match status" value="1"/>
</dbReference>
<dbReference type="PRINTS" id="PR00326">
    <property type="entry name" value="GTP1OBG"/>
</dbReference>
<dbReference type="SUPFAM" id="SSF52540">
    <property type="entry name" value="P-loop containing nucleoside triphosphate hydrolases"/>
    <property type="match status" value="2"/>
</dbReference>
<dbReference type="PROSITE" id="PS51712">
    <property type="entry name" value="G_ENGA"/>
    <property type="match status" value="2"/>
</dbReference>
<comment type="function">
    <text evidence="1">GTPase that plays an essential role in the late steps of ribosome biogenesis.</text>
</comment>
<comment type="subunit">
    <text evidence="1">Associates with the 50S ribosomal subunit.</text>
</comment>
<comment type="similarity">
    <text evidence="1">Belongs to the TRAFAC class TrmE-Era-EngA-EngB-Septin-like GTPase superfamily. EngA (Der) GTPase family.</text>
</comment>
<keyword id="KW-0342">GTP-binding</keyword>
<keyword id="KW-0547">Nucleotide-binding</keyword>
<keyword id="KW-0677">Repeat</keyword>
<keyword id="KW-0690">Ribosome biogenesis</keyword>